<proteinExistence type="inferred from homology"/>
<dbReference type="EMBL" id="CP001628">
    <property type="protein sequence ID" value="ACS31179.1"/>
    <property type="molecule type" value="Genomic_DNA"/>
</dbReference>
<dbReference type="RefSeq" id="WP_012751034.1">
    <property type="nucleotide sequence ID" value="NC_012803.1"/>
</dbReference>
<dbReference type="SMR" id="C5CC38"/>
<dbReference type="STRING" id="465515.Mlut_16920"/>
<dbReference type="EnsemblBacteria" id="ACS31179">
    <property type="protein sequence ID" value="ACS31179"/>
    <property type="gene ID" value="Mlut_16920"/>
</dbReference>
<dbReference type="GeneID" id="93343559"/>
<dbReference type="KEGG" id="mlu:Mlut_16920"/>
<dbReference type="PATRIC" id="fig|465515.4.peg.1631"/>
<dbReference type="eggNOG" id="COG0099">
    <property type="taxonomic scope" value="Bacteria"/>
</dbReference>
<dbReference type="HOGENOM" id="CLU_103849_1_2_11"/>
<dbReference type="Proteomes" id="UP000000738">
    <property type="component" value="Chromosome"/>
</dbReference>
<dbReference type="GO" id="GO:0005829">
    <property type="term" value="C:cytosol"/>
    <property type="evidence" value="ECO:0007669"/>
    <property type="project" value="TreeGrafter"/>
</dbReference>
<dbReference type="GO" id="GO:0015935">
    <property type="term" value="C:small ribosomal subunit"/>
    <property type="evidence" value="ECO:0007669"/>
    <property type="project" value="TreeGrafter"/>
</dbReference>
<dbReference type="GO" id="GO:0019843">
    <property type="term" value="F:rRNA binding"/>
    <property type="evidence" value="ECO:0007669"/>
    <property type="project" value="UniProtKB-UniRule"/>
</dbReference>
<dbReference type="GO" id="GO:0003735">
    <property type="term" value="F:structural constituent of ribosome"/>
    <property type="evidence" value="ECO:0007669"/>
    <property type="project" value="InterPro"/>
</dbReference>
<dbReference type="GO" id="GO:0000049">
    <property type="term" value="F:tRNA binding"/>
    <property type="evidence" value="ECO:0007669"/>
    <property type="project" value="UniProtKB-UniRule"/>
</dbReference>
<dbReference type="GO" id="GO:0006412">
    <property type="term" value="P:translation"/>
    <property type="evidence" value="ECO:0007669"/>
    <property type="project" value="UniProtKB-UniRule"/>
</dbReference>
<dbReference type="FunFam" id="1.10.8.50:FF:000001">
    <property type="entry name" value="30S ribosomal protein S13"/>
    <property type="match status" value="1"/>
</dbReference>
<dbReference type="FunFam" id="4.10.910.10:FF:000001">
    <property type="entry name" value="30S ribosomal protein S13"/>
    <property type="match status" value="1"/>
</dbReference>
<dbReference type="Gene3D" id="1.10.8.50">
    <property type="match status" value="1"/>
</dbReference>
<dbReference type="Gene3D" id="4.10.910.10">
    <property type="entry name" value="30s ribosomal protein s13, domain 2"/>
    <property type="match status" value="1"/>
</dbReference>
<dbReference type="HAMAP" id="MF_01315">
    <property type="entry name" value="Ribosomal_uS13"/>
    <property type="match status" value="1"/>
</dbReference>
<dbReference type="InterPro" id="IPR027437">
    <property type="entry name" value="Rbsml_uS13_C"/>
</dbReference>
<dbReference type="InterPro" id="IPR001892">
    <property type="entry name" value="Ribosomal_uS13"/>
</dbReference>
<dbReference type="InterPro" id="IPR010979">
    <property type="entry name" value="Ribosomal_uS13-like_H2TH"/>
</dbReference>
<dbReference type="InterPro" id="IPR019980">
    <property type="entry name" value="Ribosomal_uS13_bac-type"/>
</dbReference>
<dbReference type="InterPro" id="IPR018269">
    <property type="entry name" value="Ribosomal_uS13_CS"/>
</dbReference>
<dbReference type="NCBIfam" id="TIGR03631">
    <property type="entry name" value="uS13_bact"/>
    <property type="match status" value="1"/>
</dbReference>
<dbReference type="PANTHER" id="PTHR10871">
    <property type="entry name" value="30S RIBOSOMAL PROTEIN S13/40S RIBOSOMAL PROTEIN S18"/>
    <property type="match status" value="1"/>
</dbReference>
<dbReference type="PANTHER" id="PTHR10871:SF1">
    <property type="entry name" value="SMALL RIBOSOMAL SUBUNIT PROTEIN US13M"/>
    <property type="match status" value="1"/>
</dbReference>
<dbReference type="Pfam" id="PF00416">
    <property type="entry name" value="Ribosomal_S13"/>
    <property type="match status" value="1"/>
</dbReference>
<dbReference type="PIRSF" id="PIRSF002134">
    <property type="entry name" value="Ribosomal_S13"/>
    <property type="match status" value="1"/>
</dbReference>
<dbReference type="SUPFAM" id="SSF46946">
    <property type="entry name" value="S13-like H2TH domain"/>
    <property type="match status" value="1"/>
</dbReference>
<dbReference type="PROSITE" id="PS00646">
    <property type="entry name" value="RIBOSOMAL_S13_1"/>
    <property type="match status" value="1"/>
</dbReference>
<dbReference type="PROSITE" id="PS50159">
    <property type="entry name" value="RIBOSOMAL_S13_2"/>
    <property type="match status" value="1"/>
</dbReference>
<comment type="function">
    <text evidence="1">Located at the top of the head of the 30S subunit, it contacts several helices of the 16S rRNA. In the 70S ribosome it contacts the 23S rRNA (bridge B1a) and protein L5 of the 50S subunit (bridge B1b), connecting the 2 subunits; these bridges are implicated in subunit movement. Contacts the tRNAs in the A and P-sites.</text>
</comment>
<comment type="subunit">
    <text evidence="1">Part of the 30S ribosomal subunit. Forms a loose heterodimer with protein S19. Forms two bridges to the 50S subunit in the 70S ribosome.</text>
</comment>
<comment type="similarity">
    <text evidence="1">Belongs to the universal ribosomal protein uS13 family.</text>
</comment>
<keyword id="KW-1185">Reference proteome</keyword>
<keyword id="KW-0687">Ribonucleoprotein</keyword>
<keyword id="KW-0689">Ribosomal protein</keyword>
<keyword id="KW-0694">RNA-binding</keyword>
<keyword id="KW-0699">rRNA-binding</keyword>
<keyword id="KW-0820">tRNA-binding</keyword>
<organism>
    <name type="scientific">Micrococcus luteus (strain ATCC 4698 / DSM 20030 / JCM 1464 / CCM 169 / CCUG 5858 / IAM 1056 / NBRC 3333 / NCIMB 9278 / NCTC 2665 / VKM Ac-2230)</name>
    <name type="common">Micrococcus lysodeikticus</name>
    <dbReference type="NCBI Taxonomy" id="465515"/>
    <lineage>
        <taxon>Bacteria</taxon>
        <taxon>Bacillati</taxon>
        <taxon>Actinomycetota</taxon>
        <taxon>Actinomycetes</taxon>
        <taxon>Micrococcales</taxon>
        <taxon>Micrococcaceae</taxon>
        <taxon>Micrococcus</taxon>
    </lineage>
</organism>
<gene>
    <name evidence="1" type="primary">rpsM</name>
    <name type="ordered locus">Mlut_16920</name>
</gene>
<sequence>MARLAGVDIPREKRVIIALTYIYGVGKTRAEETLAATGIDPNIRVKDLSAEQLVQLRDHIEGSYKVEGDLRREVAADIRRKVEIGSYEGLRHRRGLPVRGQRTKTNARTRKGPKKTVAGKKK</sequence>
<accession>C5CC38</accession>
<feature type="chain" id="PRO_1000214401" description="Small ribosomal subunit protein uS13">
    <location>
        <begin position="1"/>
        <end position="122"/>
    </location>
</feature>
<feature type="region of interest" description="Disordered" evidence="2">
    <location>
        <begin position="93"/>
        <end position="122"/>
    </location>
</feature>
<reference key="1">
    <citation type="journal article" date="2010" name="J. Bacteriol.">
        <title>Genome sequence of the Fleming strain of Micrococcus luteus, a simple free-living actinobacterium.</title>
        <authorList>
            <person name="Young M."/>
            <person name="Artsatbanov V."/>
            <person name="Beller H.R."/>
            <person name="Chandra G."/>
            <person name="Chater K.F."/>
            <person name="Dover L.G."/>
            <person name="Goh E.B."/>
            <person name="Kahan T."/>
            <person name="Kaprelyants A.S."/>
            <person name="Kyrpides N."/>
            <person name="Lapidus A."/>
            <person name="Lowry S.R."/>
            <person name="Lykidis A."/>
            <person name="Mahillon J."/>
            <person name="Markowitz V."/>
            <person name="Mavromatis K."/>
            <person name="Mukamolova G.V."/>
            <person name="Oren A."/>
            <person name="Rokem J.S."/>
            <person name="Smith M.C."/>
            <person name="Young D.I."/>
            <person name="Greenblatt C.L."/>
        </authorList>
    </citation>
    <scope>NUCLEOTIDE SEQUENCE [LARGE SCALE GENOMIC DNA]</scope>
    <source>
        <strain>ATCC 4698 / DSM 20030 / JCM 1464 / CCM 169 / CCUG 5858 / IAM 1056 / NBRC 3333 / NCIMB 9278 / NCTC 2665 / VKM Ac-2230</strain>
    </source>
</reference>
<evidence type="ECO:0000255" key="1">
    <source>
        <dbReference type="HAMAP-Rule" id="MF_01315"/>
    </source>
</evidence>
<evidence type="ECO:0000256" key="2">
    <source>
        <dbReference type="SAM" id="MobiDB-lite"/>
    </source>
</evidence>
<evidence type="ECO:0000305" key="3"/>
<name>RS13_MICLC</name>
<protein>
    <recommendedName>
        <fullName evidence="1">Small ribosomal subunit protein uS13</fullName>
    </recommendedName>
    <alternativeName>
        <fullName evidence="3">30S ribosomal protein S13</fullName>
    </alternativeName>
</protein>